<organism>
    <name type="scientific">Ostertagia ostertagi</name>
    <name type="common">Brown stomach worm</name>
    <name type="synonym">Strongylus ostertagi</name>
    <dbReference type="NCBI Taxonomy" id="6317"/>
    <lineage>
        <taxon>Eukaryota</taxon>
        <taxon>Metazoa</taxon>
        <taxon>Ecdysozoa</taxon>
        <taxon>Nematoda</taxon>
        <taxon>Chromadorea</taxon>
        <taxon>Rhabditida</taxon>
        <taxon>Rhabditina</taxon>
        <taxon>Rhabditomorpha</taxon>
        <taxon>Strongyloidea</taxon>
        <taxon>Trichostrongylidae</taxon>
        <taxon>Ostertagia</taxon>
    </lineage>
</organism>
<gene>
    <name type="primary">rpl-38</name>
</gene>
<feature type="chain" id="PRO_0000215439" description="Large ribosomal subunit protein eL38">
    <location>
        <begin position="1"/>
        <end position="70"/>
    </location>
</feature>
<sequence>MPKQITEIKDFLVLARRKDAKIVKIKKNSLNVKFKVRCSRYLFTLVVNDKDKAEKLKQSLPPGIQVIELK</sequence>
<proteinExistence type="inferred from homology"/>
<accession>O61570</accession>
<dbReference type="EMBL" id="AF052044">
    <property type="protein sequence ID" value="AAC06293.1"/>
    <property type="molecule type" value="mRNA"/>
</dbReference>
<dbReference type="SMR" id="O61570"/>
<dbReference type="GO" id="GO:0022625">
    <property type="term" value="C:cytosolic large ribosomal subunit"/>
    <property type="evidence" value="ECO:0007669"/>
    <property type="project" value="TreeGrafter"/>
</dbReference>
<dbReference type="GO" id="GO:0003735">
    <property type="term" value="F:structural constituent of ribosome"/>
    <property type="evidence" value="ECO:0007669"/>
    <property type="project" value="InterPro"/>
</dbReference>
<dbReference type="GO" id="GO:0022618">
    <property type="term" value="P:protein-RNA complex assembly"/>
    <property type="evidence" value="ECO:0007669"/>
    <property type="project" value="TreeGrafter"/>
</dbReference>
<dbReference type="GO" id="GO:0006412">
    <property type="term" value="P:translation"/>
    <property type="evidence" value="ECO:0007669"/>
    <property type="project" value="InterPro"/>
</dbReference>
<dbReference type="FunFam" id="3.30.720.90:FF:000001">
    <property type="entry name" value="60S ribosomal protein L38"/>
    <property type="match status" value="1"/>
</dbReference>
<dbReference type="Gene3D" id="3.30.720.90">
    <property type="match status" value="1"/>
</dbReference>
<dbReference type="InterPro" id="IPR002675">
    <property type="entry name" value="Ribosomal_eL38"/>
</dbReference>
<dbReference type="InterPro" id="IPR038464">
    <property type="entry name" value="Ribosomal_eL38_sf"/>
</dbReference>
<dbReference type="PANTHER" id="PTHR10965">
    <property type="entry name" value="60S RIBOSOMAL PROTEIN L38"/>
    <property type="match status" value="1"/>
</dbReference>
<dbReference type="PANTHER" id="PTHR10965:SF0">
    <property type="entry name" value="LARGE RIBOSOMAL SUBUNIT PROTEIN EL38"/>
    <property type="match status" value="1"/>
</dbReference>
<dbReference type="Pfam" id="PF01781">
    <property type="entry name" value="Ribosomal_L38e"/>
    <property type="match status" value="1"/>
</dbReference>
<reference key="1">
    <citation type="journal article" date="2000" name="Biochem. J.">
        <title>Identification of abundant mRNAs from the third stage larvae of the parasitic nematode, Ostertagia ostertagi.</title>
        <authorList>
            <person name="Moore J."/>
            <person name="Tetley L."/>
            <person name="Devaney E."/>
        </authorList>
    </citation>
    <scope>NUCLEOTIDE SEQUENCE [MRNA]</scope>
</reference>
<comment type="similarity">
    <text evidence="1">Belongs to the eukaryotic ribosomal protein eL38 family.</text>
</comment>
<evidence type="ECO:0000305" key="1"/>
<keyword id="KW-0687">Ribonucleoprotein</keyword>
<keyword id="KW-0689">Ribosomal protein</keyword>
<name>RL38_OSTOS</name>
<protein>
    <recommendedName>
        <fullName evidence="1">Large ribosomal subunit protein eL38</fullName>
    </recommendedName>
    <alternativeName>
        <fullName>60S ribosomal protein L38</fullName>
    </alternativeName>
</protein>